<reference key="1">
    <citation type="journal article" date="1999" name="Nature">
        <title>Sequence and analysis of chromosome 2 of the plant Arabidopsis thaliana.</title>
        <authorList>
            <person name="Lin X."/>
            <person name="Kaul S."/>
            <person name="Rounsley S.D."/>
            <person name="Shea T.P."/>
            <person name="Benito M.-I."/>
            <person name="Town C.D."/>
            <person name="Fujii C.Y."/>
            <person name="Mason T.M."/>
            <person name="Bowman C.L."/>
            <person name="Barnstead M.E."/>
            <person name="Feldblyum T.V."/>
            <person name="Buell C.R."/>
            <person name="Ketchum K.A."/>
            <person name="Lee J.J."/>
            <person name="Ronning C.M."/>
            <person name="Koo H.L."/>
            <person name="Moffat K.S."/>
            <person name="Cronin L.A."/>
            <person name="Shen M."/>
            <person name="Pai G."/>
            <person name="Van Aken S."/>
            <person name="Umayam L."/>
            <person name="Tallon L.J."/>
            <person name="Gill J.E."/>
            <person name="Adams M.D."/>
            <person name="Carrera A.J."/>
            <person name="Creasy T.H."/>
            <person name="Goodman H.M."/>
            <person name="Somerville C.R."/>
            <person name="Copenhaver G.P."/>
            <person name="Preuss D."/>
            <person name="Nierman W.C."/>
            <person name="White O."/>
            <person name="Eisen J.A."/>
            <person name="Salzberg S.L."/>
            <person name="Fraser C.M."/>
            <person name="Venter J.C."/>
        </authorList>
    </citation>
    <scope>NUCLEOTIDE SEQUENCE [LARGE SCALE GENOMIC DNA]</scope>
    <source>
        <strain>cv. Columbia</strain>
    </source>
</reference>
<reference key="2">
    <citation type="journal article" date="2017" name="Plant J.">
        <title>Araport11: a complete reannotation of the Arabidopsis thaliana reference genome.</title>
        <authorList>
            <person name="Cheng C.Y."/>
            <person name="Krishnakumar V."/>
            <person name="Chan A.P."/>
            <person name="Thibaud-Nissen F."/>
            <person name="Schobel S."/>
            <person name="Town C.D."/>
        </authorList>
    </citation>
    <scope>GENOME REANNOTATION</scope>
    <source>
        <strain>cv. Columbia</strain>
    </source>
</reference>
<reference key="3">
    <citation type="submission" date="2006-11" db="EMBL/GenBank/DDBJ databases">
        <title>Arabidopsis ORF clones.</title>
        <authorList>
            <person name="Bautista V.R."/>
            <person name="Kim C.J."/>
            <person name="Chen H."/>
            <person name="Quinitio C."/>
            <person name="Ecker J.R."/>
        </authorList>
    </citation>
    <scope>NUCLEOTIDE SEQUENCE [LARGE SCALE MRNA]</scope>
</reference>
<reference key="4">
    <citation type="journal article" date="2007" name="Mol. Cell">
        <title>Purification of a plant mediator from Arabidopsis thaliana identifies PFT1 as the Med25 subunit.</title>
        <authorList>
            <person name="Baeckstroem S."/>
            <person name="Elfving N."/>
            <person name="Nilsson R."/>
            <person name="Wingsle G."/>
            <person name="Bjoerklund S."/>
        </authorList>
    </citation>
    <scope>IDENTIFICATION BY MASS SPECTROMETRY</scope>
    <scope>SUBUNIT</scope>
    <scope>NOMENCLATURE</scope>
</reference>
<reference key="5">
    <citation type="journal article" date="2011" name="Plant Physiol.">
        <title>The Mediator complex in plants: structure, phylogeny, and expression profiling of representative genes in a dicot (Arabidopsis) and a monocot (rice) during reproduction and abiotic stress.</title>
        <authorList>
            <person name="Mathur S."/>
            <person name="Vyas S."/>
            <person name="Kapoor S."/>
            <person name="Tyagi A.K."/>
        </authorList>
    </citation>
    <scope>IDENTIFICATION</scope>
    <scope>NOMENCLATURE</scope>
</reference>
<reference key="6">
    <citation type="journal article" date="2014" name="Nat. Commun.">
        <title>MED18 interaction with distinct transcription factors regulates multiple plant functions.</title>
        <authorList>
            <person name="Lai Z."/>
            <person name="Schluttenhofer C.M."/>
            <person name="Bhide K."/>
            <person name="Shreve J."/>
            <person name="Thimmapuram J."/>
            <person name="Lee S.Y."/>
            <person name="Yun D.-J."/>
            <person name="Mengiste T."/>
        </authorList>
    </citation>
    <scope>FUNCTION</scope>
    <scope>DISRUPTION PHENOTYPE</scope>
    <scope>INTERACTION WITH YY1; ABI4 AND SUF4</scope>
    <scope>SUBCELLULAR LOCATION</scope>
    <source>
        <strain>cv. Columbia</strain>
    </source>
</reference>
<gene>
    <name evidence="4" type="primary">MED18</name>
    <name evidence="5" type="synonym">MED18_1</name>
    <name evidence="7" type="ordered locus">At2g22370</name>
    <name evidence="8" type="ORF">F14M13.23</name>
</gene>
<protein>
    <recommendedName>
        <fullName evidence="4">Mediator of RNA polymerase II transcription subunit 18</fullName>
    </recommendedName>
</protein>
<proteinExistence type="evidence at protein level"/>
<organism>
    <name type="scientific">Arabidopsis thaliana</name>
    <name type="common">Mouse-ear cress</name>
    <dbReference type="NCBI Taxonomy" id="3702"/>
    <lineage>
        <taxon>Eukaryota</taxon>
        <taxon>Viridiplantae</taxon>
        <taxon>Streptophyta</taxon>
        <taxon>Embryophyta</taxon>
        <taxon>Tracheophyta</taxon>
        <taxon>Spermatophyta</taxon>
        <taxon>Magnoliopsida</taxon>
        <taxon>eudicotyledons</taxon>
        <taxon>Gunneridae</taxon>
        <taxon>Pentapetalae</taxon>
        <taxon>rosids</taxon>
        <taxon>malvids</taxon>
        <taxon>Brassicales</taxon>
        <taxon>Brassicaceae</taxon>
        <taxon>Camelineae</taxon>
        <taxon>Arabidopsis</taxon>
    </lineage>
</organism>
<sequence>MSMECVVQGIIETQHVEALEILLQGLCGVQRERLRVHELCLRSGPNLGVVSSEVRLLCDLDQPEPTWTVKHVGGAMRGAGADQISVLVRNMIESKVSKNALRMFYALGYKLDHELLKVGFAFHFQRTAHISVSVSSVNKMPKVHAIDEAVPVTPGMQIVDVTAPATSENYSEVAAAVSSFCEFLAPLVHLSKPSISTGVVPTAAAAAASLMSDGGGTTL</sequence>
<feature type="chain" id="PRO_0000418352" description="Mediator of RNA polymerase II transcription subunit 18">
    <location>
        <begin position="1"/>
        <end position="219"/>
    </location>
</feature>
<dbReference type="EMBL" id="AC006592">
    <property type="protein sequence ID" value="AAD22361.1"/>
    <property type="molecule type" value="Genomic_DNA"/>
</dbReference>
<dbReference type="EMBL" id="CP002685">
    <property type="protein sequence ID" value="AEC07298.1"/>
    <property type="molecule type" value="Genomic_DNA"/>
</dbReference>
<dbReference type="EMBL" id="BT029378">
    <property type="protein sequence ID" value="ABK32192.1"/>
    <property type="molecule type" value="mRNA"/>
</dbReference>
<dbReference type="PIR" id="H84611">
    <property type="entry name" value="H84611"/>
</dbReference>
<dbReference type="RefSeq" id="NP_565534.1">
    <property type="nucleotide sequence ID" value="NM_127802.4"/>
</dbReference>
<dbReference type="SMR" id="Q9SJZ6"/>
<dbReference type="BioGRID" id="2122">
    <property type="interactions" value="2"/>
</dbReference>
<dbReference type="FunCoup" id="Q9SJZ6">
    <property type="interactions" value="2487"/>
</dbReference>
<dbReference type="IntAct" id="Q9SJZ6">
    <property type="interactions" value="3"/>
</dbReference>
<dbReference type="STRING" id="3702.Q9SJZ6"/>
<dbReference type="GlyGen" id="Q9SJZ6">
    <property type="glycosylation" value="2 sites"/>
</dbReference>
<dbReference type="PaxDb" id="3702-AT2G22370.1"/>
<dbReference type="ProteomicsDB" id="239052"/>
<dbReference type="EnsemblPlants" id="AT2G22370.1">
    <property type="protein sequence ID" value="AT2G22370.1"/>
    <property type="gene ID" value="AT2G22370"/>
</dbReference>
<dbReference type="GeneID" id="816769"/>
<dbReference type="Gramene" id="AT2G22370.1">
    <property type="protein sequence ID" value="AT2G22370.1"/>
    <property type="gene ID" value="AT2G22370"/>
</dbReference>
<dbReference type="KEGG" id="ath:AT2G22370"/>
<dbReference type="Araport" id="AT2G22370"/>
<dbReference type="TAIR" id="AT2G22370">
    <property type="gene designation" value="MED18"/>
</dbReference>
<dbReference type="eggNOG" id="KOG3264">
    <property type="taxonomic scope" value="Eukaryota"/>
</dbReference>
<dbReference type="HOGENOM" id="CLU_111349_0_0_1"/>
<dbReference type="InParanoid" id="Q9SJZ6"/>
<dbReference type="OMA" id="CIVQGII"/>
<dbReference type="OrthoDB" id="2015832at2759"/>
<dbReference type="PhylomeDB" id="Q9SJZ6"/>
<dbReference type="PRO" id="PR:Q9SJZ6"/>
<dbReference type="Proteomes" id="UP000006548">
    <property type="component" value="Chromosome 2"/>
</dbReference>
<dbReference type="ExpressionAtlas" id="Q9SJZ6">
    <property type="expression patterns" value="baseline and differential"/>
</dbReference>
<dbReference type="GO" id="GO:0016592">
    <property type="term" value="C:mediator complex"/>
    <property type="evidence" value="ECO:0000314"/>
    <property type="project" value="UniProtKB"/>
</dbReference>
<dbReference type="GO" id="GO:0005634">
    <property type="term" value="C:nucleus"/>
    <property type="evidence" value="ECO:0000314"/>
    <property type="project" value="UniProtKB"/>
</dbReference>
<dbReference type="GO" id="GO:0003712">
    <property type="term" value="F:transcription coregulator activity"/>
    <property type="evidence" value="ECO:0000315"/>
    <property type="project" value="UniProtKB"/>
</dbReference>
<dbReference type="GO" id="GO:0009738">
    <property type="term" value="P:abscisic acid-activated signaling pathway"/>
    <property type="evidence" value="ECO:0007669"/>
    <property type="project" value="UniProtKB-KW"/>
</dbReference>
<dbReference type="GO" id="GO:0048440">
    <property type="term" value="P:carpel development"/>
    <property type="evidence" value="ECO:0000316"/>
    <property type="project" value="TAIR"/>
</dbReference>
<dbReference type="GO" id="GO:0006952">
    <property type="term" value="P:defense response"/>
    <property type="evidence" value="ECO:0007669"/>
    <property type="project" value="UniProtKB-KW"/>
</dbReference>
<dbReference type="GO" id="GO:0006353">
    <property type="term" value="P:DNA-templated transcription termination"/>
    <property type="evidence" value="ECO:0007669"/>
    <property type="project" value="UniProtKB-KW"/>
</dbReference>
<dbReference type="GO" id="GO:0009873">
    <property type="term" value="P:ethylene-activated signaling pathway"/>
    <property type="evidence" value="ECO:0007669"/>
    <property type="project" value="UniProtKB-KW"/>
</dbReference>
<dbReference type="GO" id="GO:0035196">
    <property type="term" value="P:miRNA processing"/>
    <property type="evidence" value="ECO:0000315"/>
    <property type="project" value="TAIR"/>
</dbReference>
<dbReference type="GO" id="GO:0045892">
    <property type="term" value="P:negative regulation of DNA-templated transcription"/>
    <property type="evidence" value="ECO:0000315"/>
    <property type="project" value="TAIR"/>
</dbReference>
<dbReference type="GO" id="GO:0048441">
    <property type="term" value="P:petal development"/>
    <property type="evidence" value="ECO:0000316"/>
    <property type="project" value="TAIR"/>
</dbReference>
<dbReference type="GO" id="GO:0060261">
    <property type="term" value="P:positive regulation of transcription initiation by RNA polymerase II"/>
    <property type="evidence" value="ECO:0000315"/>
    <property type="project" value="UniProtKB"/>
</dbReference>
<dbReference type="GO" id="GO:1900150">
    <property type="term" value="P:regulation of defense response to fungus"/>
    <property type="evidence" value="ECO:0000315"/>
    <property type="project" value="UniProtKB"/>
</dbReference>
<dbReference type="GO" id="GO:0006355">
    <property type="term" value="P:regulation of DNA-templated transcription"/>
    <property type="evidence" value="ECO:0000315"/>
    <property type="project" value="UniProtKB"/>
</dbReference>
<dbReference type="GO" id="GO:0032784">
    <property type="term" value="P:regulation of DNA-templated transcription elongation"/>
    <property type="evidence" value="ECO:0000314"/>
    <property type="project" value="UniProtKB"/>
</dbReference>
<dbReference type="GO" id="GO:2000142">
    <property type="term" value="P:regulation of DNA-templated transcription initiation"/>
    <property type="evidence" value="ECO:0000314"/>
    <property type="project" value="UniProtKB"/>
</dbReference>
<dbReference type="GO" id="GO:2000028">
    <property type="term" value="P:regulation of photoperiodism, flowering"/>
    <property type="evidence" value="ECO:0000315"/>
    <property type="project" value="UniProtKB"/>
</dbReference>
<dbReference type="GO" id="GO:2000031">
    <property type="term" value="P:regulation of salicylic acid mediated signaling pathway"/>
    <property type="evidence" value="ECO:0000315"/>
    <property type="project" value="TAIR"/>
</dbReference>
<dbReference type="GO" id="GO:0031554">
    <property type="term" value="P:regulation of termination of DNA-templated transcription"/>
    <property type="evidence" value="ECO:0000314"/>
    <property type="project" value="UniProtKB"/>
</dbReference>
<dbReference type="GO" id="GO:0048510">
    <property type="term" value="P:regulation of timing of transition from vegetative to reproductive phase"/>
    <property type="evidence" value="ECO:0000315"/>
    <property type="project" value="TAIR"/>
</dbReference>
<dbReference type="GO" id="GO:0010219">
    <property type="term" value="P:regulation of vernalization response"/>
    <property type="evidence" value="ECO:0000315"/>
    <property type="project" value="TAIR"/>
</dbReference>
<dbReference type="GO" id="GO:0009737">
    <property type="term" value="P:response to abscisic acid"/>
    <property type="evidence" value="ECO:0000315"/>
    <property type="project" value="UniProtKB"/>
</dbReference>
<dbReference type="GO" id="GO:0009723">
    <property type="term" value="P:response to ethylene"/>
    <property type="evidence" value="ECO:0000315"/>
    <property type="project" value="UniProtKB"/>
</dbReference>
<dbReference type="GO" id="GO:0048442">
    <property type="term" value="P:sepal development"/>
    <property type="evidence" value="ECO:0000316"/>
    <property type="project" value="TAIR"/>
</dbReference>
<dbReference type="GO" id="GO:0048833">
    <property type="term" value="P:specification of floral organ number"/>
    <property type="evidence" value="ECO:0000315"/>
    <property type="project" value="TAIR"/>
</dbReference>
<dbReference type="GO" id="GO:0048443">
    <property type="term" value="P:stamen development"/>
    <property type="evidence" value="ECO:0000316"/>
    <property type="project" value="TAIR"/>
</dbReference>
<dbReference type="FunFam" id="2.40.320.10:FF:000004">
    <property type="entry name" value="Mediator of RNA polymerase II transcription subunit 18"/>
    <property type="match status" value="1"/>
</dbReference>
<dbReference type="Gene3D" id="2.40.320.10">
    <property type="entry name" value="Hypothetical Protein Pfu-838710-001"/>
    <property type="match status" value="1"/>
</dbReference>
<dbReference type="InterPro" id="IPR019095">
    <property type="entry name" value="Mediator_Med18"/>
</dbReference>
<dbReference type="PANTHER" id="PTHR13321:SF2">
    <property type="entry name" value="MEDIATOR OF RNA POLYMERASE II TRANSCRIPTION SUBUNIT 18"/>
    <property type="match status" value="1"/>
</dbReference>
<dbReference type="PANTHER" id="PTHR13321">
    <property type="entry name" value="MEDIATOR OF RNA POLYMERASE II TRANSCRIPTION, SUBUNIT 18"/>
    <property type="match status" value="1"/>
</dbReference>
<dbReference type="Pfam" id="PF09637">
    <property type="entry name" value="Med18"/>
    <property type="match status" value="1"/>
</dbReference>
<name>MED18_ARATH</name>
<comment type="function">
    <text evidence="2 3">Component of the Mediator complex, a coactivator involved in the regulated transcription of nearly all RNA polymerase II-dependent genes. Mediator functions as a bridge to convey information from gene-specific regulatory proteins to the basal RNA polymerase II transcription machinery. The Mediator complex, having a compact conformation in its free form, is recruited to promoters by direct interactions with regulatory proteins and serves for the assembly of a functional pre-initiation complex with RNA polymerase II and the general transcription factors (PubMed:22021418, PubMed:24451981). Involved in the regulation of histone H3 lysine tri-methylation (H3K36me3). Associates with the promoter, coding and terminator regions of target genes suggesting its function in transcription initiation, elongation and termination. Multifunctional protein which regulates plant immunity, especially during necrotrophic fungal infection (e.g. B.cinerea and A.brassicicola), flowering time and responses to hormones (e.g. abscisic acid ABA and ethylene) through interactions with distinct transcription factors (PubMed:24451981).</text>
</comment>
<comment type="subunit">
    <text evidence="1 3">Component of the Mediator complex (PubMed:17560376). Interacts with YY1 to suppress disease susceptibility via the repression of genes glutaredoxins GRX480, GRXS13 and thioredoxin TRX-h5. Binds to ABI4 to regulate abscisic acid responses; recruited by ABI4 to ABI5 promoter in the presence of abscisic acid (ABA). Interacts with SUF4 to regulate flowering time; recruited by SUF4 to FLC promoter (PubMed:24451981).</text>
</comment>
<comment type="interaction">
    <interactant intactId="EBI-1386265">
        <id>Q9SJZ6</id>
    </interactant>
    <interactant intactId="EBI-1386270">
        <id>Q6NPF4</id>
        <label>MED20A</label>
    </interactant>
    <organismsDiffer>false</organismsDiffer>
    <experiments>3</experiments>
</comment>
<comment type="subcellular location">
    <subcellularLocation>
        <location evidence="3">Nucleus</location>
    </subcellularLocation>
</comment>
<comment type="disruption phenotype">
    <text evidence="3">Deregulated expression of glutaredoxins GRX480, GRXS13 and thioredoxin TRX-h5 leading to enhanced susceptibility to fungal infection (e.g. B.cinerea and A.brassicicola). Altered RNA polymerase II occupancy and histone H3 lysine tri-methylation (H3K36me3) of target genes. Insensitivity to abscisic acid (ABA) and to the ethylene precursor 1-aminocyclopropane-1-carboxylic acid (ACC). Delayed flowering.</text>
</comment>
<comment type="similarity">
    <text evidence="6">Belongs to the Mediator complex subunit 18 family.</text>
</comment>
<accession>Q9SJZ6</accession>
<keyword id="KW-0938">Abscisic acid signaling pathway</keyword>
<keyword id="KW-0217">Developmental protein</keyword>
<keyword id="KW-0936">Ethylene signaling pathway</keyword>
<keyword id="KW-0539">Nucleus</keyword>
<keyword id="KW-0611">Plant defense</keyword>
<keyword id="KW-1185">Reference proteome</keyword>
<keyword id="KW-0804">Transcription</keyword>
<keyword id="KW-0805">Transcription regulation</keyword>
<keyword id="KW-0806">Transcription termination</keyword>
<evidence type="ECO:0000269" key="1">
    <source>
    </source>
</evidence>
<evidence type="ECO:0000269" key="2">
    <source>
    </source>
</evidence>
<evidence type="ECO:0000269" key="3">
    <source>
    </source>
</evidence>
<evidence type="ECO:0000303" key="4">
    <source>
    </source>
</evidence>
<evidence type="ECO:0000303" key="5">
    <source>
    </source>
</evidence>
<evidence type="ECO:0000305" key="6"/>
<evidence type="ECO:0000312" key="7">
    <source>
        <dbReference type="Araport" id="AT2G22370"/>
    </source>
</evidence>
<evidence type="ECO:0000312" key="8">
    <source>
        <dbReference type="EMBL" id="AAD22361.1"/>
    </source>
</evidence>